<dbReference type="EC" id="3.1.21.7" evidence="1"/>
<dbReference type="EMBL" id="AE014075">
    <property type="protein sequence ID" value="AAN83383.1"/>
    <property type="molecule type" value="Genomic_DNA"/>
</dbReference>
<dbReference type="RefSeq" id="WP_000362388.1">
    <property type="nucleotide sequence ID" value="NZ_CP051263.1"/>
</dbReference>
<dbReference type="SMR" id="P68740"/>
<dbReference type="STRING" id="199310.c4955"/>
<dbReference type="GeneID" id="75169444"/>
<dbReference type="KEGG" id="ecc:c4955"/>
<dbReference type="eggNOG" id="COG1515">
    <property type="taxonomic scope" value="Bacteria"/>
</dbReference>
<dbReference type="HOGENOM" id="CLU_047631_1_0_6"/>
<dbReference type="BioCyc" id="ECOL199310:C4955-MONOMER"/>
<dbReference type="Proteomes" id="UP000001410">
    <property type="component" value="Chromosome"/>
</dbReference>
<dbReference type="GO" id="GO:0005737">
    <property type="term" value="C:cytoplasm"/>
    <property type="evidence" value="ECO:0007669"/>
    <property type="project" value="UniProtKB-SubCell"/>
</dbReference>
<dbReference type="GO" id="GO:0043737">
    <property type="term" value="F:deoxyribonuclease V activity"/>
    <property type="evidence" value="ECO:0007669"/>
    <property type="project" value="UniProtKB-UniRule"/>
</dbReference>
<dbReference type="GO" id="GO:0000287">
    <property type="term" value="F:magnesium ion binding"/>
    <property type="evidence" value="ECO:0007669"/>
    <property type="project" value="UniProtKB-UniRule"/>
</dbReference>
<dbReference type="GO" id="GO:0016891">
    <property type="term" value="F:RNA endonuclease activity, producing 5'-phosphomonoesters"/>
    <property type="evidence" value="ECO:0007669"/>
    <property type="project" value="TreeGrafter"/>
</dbReference>
<dbReference type="GO" id="GO:0003727">
    <property type="term" value="F:single-stranded RNA binding"/>
    <property type="evidence" value="ECO:0007669"/>
    <property type="project" value="TreeGrafter"/>
</dbReference>
<dbReference type="GO" id="GO:0006281">
    <property type="term" value="P:DNA repair"/>
    <property type="evidence" value="ECO:0007669"/>
    <property type="project" value="UniProtKB-UniRule"/>
</dbReference>
<dbReference type="CDD" id="cd06559">
    <property type="entry name" value="Endonuclease_V"/>
    <property type="match status" value="1"/>
</dbReference>
<dbReference type="FunFam" id="3.30.2170.10:FF:000001">
    <property type="entry name" value="Endonuclease V"/>
    <property type="match status" value="1"/>
</dbReference>
<dbReference type="Gene3D" id="3.30.2170.10">
    <property type="entry name" value="archaeoglobus fulgidus dsm 4304 superfamily"/>
    <property type="match status" value="1"/>
</dbReference>
<dbReference type="HAMAP" id="MF_00801">
    <property type="entry name" value="Endonuclease_5"/>
    <property type="match status" value="1"/>
</dbReference>
<dbReference type="InterPro" id="IPR007581">
    <property type="entry name" value="Endonuclease-V"/>
</dbReference>
<dbReference type="NCBIfam" id="NF008629">
    <property type="entry name" value="PRK11617.1"/>
    <property type="match status" value="1"/>
</dbReference>
<dbReference type="PANTHER" id="PTHR28511">
    <property type="entry name" value="ENDONUCLEASE V"/>
    <property type="match status" value="1"/>
</dbReference>
<dbReference type="PANTHER" id="PTHR28511:SF1">
    <property type="entry name" value="ENDONUCLEASE V"/>
    <property type="match status" value="1"/>
</dbReference>
<dbReference type="Pfam" id="PF04493">
    <property type="entry name" value="Endonuclease_5"/>
    <property type="match status" value="1"/>
</dbReference>
<keyword id="KW-0963">Cytoplasm</keyword>
<keyword id="KW-0227">DNA damage</keyword>
<keyword id="KW-0234">DNA repair</keyword>
<keyword id="KW-0255">Endonuclease</keyword>
<keyword id="KW-0378">Hydrolase</keyword>
<keyword id="KW-0460">Magnesium</keyword>
<keyword id="KW-0479">Metal-binding</keyword>
<keyword id="KW-0540">Nuclease</keyword>
<keyword id="KW-1185">Reference proteome</keyword>
<gene>
    <name evidence="1" type="primary">nfi</name>
    <name type="ordered locus">c4955</name>
</gene>
<reference key="1">
    <citation type="journal article" date="2002" name="Proc. Natl. Acad. Sci. U.S.A.">
        <title>Extensive mosaic structure revealed by the complete genome sequence of uropathogenic Escherichia coli.</title>
        <authorList>
            <person name="Welch R.A."/>
            <person name="Burland V."/>
            <person name="Plunkett G. III"/>
            <person name="Redford P."/>
            <person name="Roesch P."/>
            <person name="Rasko D."/>
            <person name="Buckles E.L."/>
            <person name="Liou S.-R."/>
            <person name="Boutin A."/>
            <person name="Hackett J."/>
            <person name="Stroud D."/>
            <person name="Mayhew G.F."/>
            <person name="Rose D.J."/>
            <person name="Zhou S."/>
            <person name="Schwartz D.C."/>
            <person name="Perna N.T."/>
            <person name="Mobley H.L.T."/>
            <person name="Donnenberg M.S."/>
            <person name="Blattner F.R."/>
        </authorList>
    </citation>
    <scope>NUCLEOTIDE SEQUENCE [LARGE SCALE GENOMIC DNA]</scope>
    <source>
        <strain>CFT073 / ATCC 700928 / UPEC</strain>
    </source>
</reference>
<evidence type="ECO:0000255" key="1">
    <source>
        <dbReference type="HAMAP-Rule" id="MF_00801"/>
    </source>
</evidence>
<sequence length="223" mass="24673">MDLASLRAQQIELASSVIREDRLDKDPPDLIAGADVGFEQGGEVTRAAMVLLKYPSLELVEYKVARIATTMPYIPGFLSFREYPALLAAWEMLSQKPDLVFVDGHGISHPRRLGVASHFGLLVDVPTIGVAKKRLCGKFEPLSSEPGALAPLMDKGEQLAWVWRSKARCNPLFIATGHRVSVDSALAWVQRCMKGYRLPEPTRWADAVASERPAFVRYTANQP</sequence>
<accession>P68740</accession>
<accession>P32679</accession>
<protein>
    <recommendedName>
        <fullName evidence="1">Endonuclease V</fullName>
        <ecNumber evidence="1">3.1.21.7</ecNumber>
    </recommendedName>
    <alternativeName>
        <fullName evidence="1">Deoxyinosine 3'endonuclease</fullName>
    </alternativeName>
    <alternativeName>
        <fullName evidence="1">Deoxyribonuclease V</fullName>
        <shortName evidence="1">DNase V</shortName>
    </alternativeName>
</protein>
<organism>
    <name type="scientific">Escherichia coli O6:H1 (strain CFT073 / ATCC 700928 / UPEC)</name>
    <dbReference type="NCBI Taxonomy" id="199310"/>
    <lineage>
        <taxon>Bacteria</taxon>
        <taxon>Pseudomonadati</taxon>
        <taxon>Pseudomonadota</taxon>
        <taxon>Gammaproteobacteria</taxon>
        <taxon>Enterobacterales</taxon>
        <taxon>Enterobacteriaceae</taxon>
        <taxon>Escherichia</taxon>
    </lineage>
</organism>
<name>NFI_ECOL6</name>
<proteinExistence type="inferred from homology"/>
<feature type="chain" id="PRO_0000159661" description="Endonuclease V">
    <location>
        <begin position="1"/>
        <end position="223"/>
    </location>
</feature>
<feature type="binding site" evidence="1">
    <location>
        <position position="35"/>
    </location>
    <ligand>
        <name>Mg(2+)</name>
        <dbReference type="ChEBI" id="CHEBI:18420"/>
    </ligand>
</feature>
<feature type="binding site" evidence="1">
    <location>
        <position position="103"/>
    </location>
    <ligand>
        <name>Mg(2+)</name>
        <dbReference type="ChEBI" id="CHEBI:18420"/>
    </ligand>
</feature>
<feature type="site" description="Interaction with target DNA" evidence="1">
    <location>
        <position position="73"/>
    </location>
</feature>
<comment type="function">
    <text evidence="1">DNA repair enzyme involved in the repair of deaminated bases. Selectively cleaves double-stranded DNA at the second phosphodiester bond 3' to a deoxyinosine leaving behind the intact lesion on the nicked DNA.</text>
</comment>
<comment type="catalytic activity">
    <reaction evidence="1">
        <text>Endonucleolytic cleavage at apurinic or apyrimidinic sites to products with a 5'-phosphate.</text>
        <dbReference type="EC" id="3.1.21.7"/>
    </reaction>
</comment>
<comment type="cofactor">
    <cofactor evidence="1">
        <name>Mg(2+)</name>
        <dbReference type="ChEBI" id="CHEBI:18420"/>
    </cofactor>
</comment>
<comment type="subcellular location">
    <subcellularLocation>
        <location evidence="1">Cytoplasm</location>
    </subcellularLocation>
</comment>
<comment type="similarity">
    <text evidence="1">Belongs to the endonuclease V family.</text>
</comment>